<evidence type="ECO:0000255" key="1">
    <source>
        <dbReference type="HAMAP-Rule" id="MF_00412"/>
    </source>
</evidence>
<feature type="chain" id="PRO_1000205996" description="Gamma-glutamyl phosphate reductase">
    <location>
        <begin position="1"/>
        <end position="418"/>
    </location>
</feature>
<protein>
    <recommendedName>
        <fullName evidence="1">Gamma-glutamyl phosphate reductase</fullName>
        <shortName evidence="1">GPR</shortName>
        <ecNumber evidence="1">1.2.1.41</ecNumber>
    </recommendedName>
    <alternativeName>
        <fullName evidence="1">Glutamate-5-semialdehyde dehydrogenase</fullName>
    </alternativeName>
    <alternativeName>
        <fullName evidence="1">Glutamyl-gamma-semialdehyde dehydrogenase</fullName>
        <shortName evidence="1">GSA dehydrogenase</shortName>
    </alternativeName>
</protein>
<keyword id="KW-0028">Amino-acid biosynthesis</keyword>
<keyword id="KW-0963">Cytoplasm</keyword>
<keyword id="KW-0521">NADP</keyword>
<keyword id="KW-0560">Oxidoreductase</keyword>
<keyword id="KW-0641">Proline biosynthesis</keyword>
<comment type="function">
    <text evidence="1">Catalyzes the NADPH-dependent reduction of L-glutamate 5-phosphate into L-glutamate 5-semialdehyde and phosphate. The product spontaneously undergoes cyclization to form 1-pyrroline-5-carboxylate.</text>
</comment>
<comment type="catalytic activity">
    <reaction evidence="1">
        <text>L-glutamate 5-semialdehyde + phosphate + NADP(+) = L-glutamyl 5-phosphate + NADPH + H(+)</text>
        <dbReference type="Rhea" id="RHEA:19541"/>
        <dbReference type="ChEBI" id="CHEBI:15378"/>
        <dbReference type="ChEBI" id="CHEBI:43474"/>
        <dbReference type="ChEBI" id="CHEBI:57783"/>
        <dbReference type="ChEBI" id="CHEBI:58066"/>
        <dbReference type="ChEBI" id="CHEBI:58274"/>
        <dbReference type="ChEBI" id="CHEBI:58349"/>
        <dbReference type="EC" id="1.2.1.41"/>
    </reaction>
</comment>
<comment type="pathway">
    <text evidence="1">Amino-acid biosynthesis; L-proline biosynthesis; L-glutamate 5-semialdehyde from L-glutamate: step 2/2.</text>
</comment>
<comment type="subcellular location">
    <subcellularLocation>
        <location evidence="1">Cytoplasm</location>
    </subcellularLocation>
</comment>
<comment type="similarity">
    <text evidence="1">Belongs to the gamma-glutamyl phosphate reductase family.</text>
</comment>
<gene>
    <name evidence="1" type="primary">proA</name>
    <name type="ordered locus">EUBREC_1651</name>
</gene>
<sequence>MNDLEKICADAYEARVKIGTLDTDIKNKVLNDAADNLLKAEKEILEANKRDVATAEENMKAKSMIDRLSLDHDRLLGMADGLRQIAKLADPIGEVMSMAKRPNGLIIGKRRVAIGVVGIIFEARPNVTSDAFGLCFKTGNCVILKGGSDAINTNIAIVKALKKALTDNLVSDAALALIESTDRETTNAFMKMDQYVDVLIPRGGAGLIQNVVKNATIPVIQTGTGNCHVYVDKDADFDMAVNIINNAKTQRISVCNACESIVVHSAIAEEFLPKLYDKLREHHVQLHCDERAQAILAGRDDVTEATADDWGMEYLDYIMSVKIVDSIDEAIEHINRYNTSHSEAIVTNDYDNAQKFLNEIDAACVYVNASTRFSDGNEFGFGAEIGISTQKLHARGPMGLEALTSYKYIIYGSGQIRE</sequence>
<accession>C4Z9V4</accession>
<name>PROA_AGARV</name>
<proteinExistence type="inferred from homology"/>
<reference key="1">
    <citation type="journal article" date="2009" name="Proc. Natl. Acad. Sci. U.S.A.">
        <title>Characterizing a model human gut microbiota composed of members of its two dominant bacterial phyla.</title>
        <authorList>
            <person name="Mahowald M.A."/>
            <person name="Rey F.E."/>
            <person name="Seedorf H."/>
            <person name="Turnbaugh P.J."/>
            <person name="Fulton R.S."/>
            <person name="Wollam A."/>
            <person name="Shah N."/>
            <person name="Wang C."/>
            <person name="Magrini V."/>
            <person name="Wilson R.K."/>
            <person name="Cantarel B.L."/>
            <person name="Coutinho P.M."/>
            <person name="Henrissat B."/>
            <person name="Crock L.W."/>
            <person name="Russell A."/>
            <person name="Verberkmoes N.C."/>
            <person name="Hettich R.L."/>
            <person name="Gordon J.I."/>
        </authorList>
    </citation>
    <scope>NUCLEOTIDE SEQUENCE [LARGE SCALE GENOMIC DNA]</scope>
    <source>
        <strain>ATCC 33656 / DSM 3377 / JCM 17463 / KCTC 5835 / LMG 30912 / VPI 0990</strain>
    </source>
</reference>
<organism>
    <name type="scientific">Agathobacter rectalis (strain ATCC 33656 / DSM 3377 / JCM 17463 / KCTC 5835 / VPI 0990)</name>
    <name type="common">Eubacterium rectale</name>
    <dbReference type="NCBI Taxonomy" id="515619"/>
    <lineage>
        <taxon>Bacteria</taxon>
        <taxon>Bacillati</taxon>
        <taxon>Bacillota</taxon>
        <taxon>Clostridia</taxon>
        <taxon>Lachnospirales</taxon>
        <taxon>Lachnospiraceae</taxon>
        <taxon>Agathobacter</taxon>
    </lineage>
</organism>
<dbReference type="EC" id="1.2.1.41" evidence="1"/>
<dbReference type="EMBL" id="CP001107">
    <property type="protein sequence ID" value="ACR75395.1"/>
    <property type="molecule type" value="Genomic_DNA"/>
</dbReference>
<dbReference type="RefSeq" id="WP_012742493.1">
    <property type="nucleotide sequence ID" value="NC_012781.1"/>
</dbReference>
<dbReference type="SMR" id="C4Z9V4"/>
<dbReference type="STRING" id="515619.EUBREC_1651"/>
<dbReference type="PaxDb" id="515619-EUBREC_1651"/>
<dbReference type="GeneID" id="86988456"/>
<dbReference type="KEGG" id="ere:EUBREC_1651"/>
<dbReference type="HOGENOM" id="CLU_030231_0_0_9"/>
<dbReference type="UniPathway" id="UPA00098">
    <property type="reaction ID" value="UER00360"/>
</dbReference>
<dbReference type="Proteomes" id="UP000001477">
    <property type="component" value="Chromosome"/>
</dbReference>
<dbReference type="GO" id="GO:0005737">
    <property type="term" value="C:cytoplasm"/>
    <property type="evidence" value="ECO:0007669"/>
    <property type="project" value="UniProtKB-SubCell"/>
</dbReference>
<dbReference type="GO" id="GO:0004350">
    <property type="term" value="F:glutamate-5-semialdehyde dehydrogenase activity"/>
    <property type="evidence" value="ECO:0007669"/>
    <property type="project" value="UniProtKB-UniRule"/>
</dbReference>
<dbReference type="GO" id="GO:0050661">
    <property type="term" value="F:NADP binding"/>
    <property type="evidence" value="ECO:0007669"/>
    <property type="project" value="InterPro"/>
</dbReference>
<dbReference type="GO" id="GO:0055129">
    <property type="term" value="P:L-proline biosynthetic process"/>
    <property type="evidence" value="ECO:0007669"/>
    <property type="project" value="UniProtKB-UniRule"/>
</dbReference>
<dbReference type="CDD" id="cd07079">
    <property type="entry name" value="ALDH_F18-19_ProA-GPR"/>
    <property type="match status" value="1"/>
</dbReference>
<dbReference type="FunFam" id="3.40.309.10:FF:000006">
    <property type="entry name" value="Gamma-glutamyl phosphate reductase"/>
    <property type="match status" value="1"/>
</dbReference>
<dbReference type="Gene3D" id="3.40.605.10">
    <property type="entry name" value="Aldehyde Dehydrogenase, Chain A, domain 1"/>
    <property type="match status" value="1"/>
</dbReference>
<dbReference type="Gene3D" id="3.40.309.10">
    <property type="entry name" value="Aldehyde Dehydrogenase, Chain A, domain 2"/>
    <property type="match status" value="1"/>
</dbReference>
<dbReference type="HAMAP" id="MF_00412">
    <property type="entry name" value="ProA"/>
    <property type="match status" value="1"/>
</dbReference>
<dbReference type="InterPro" id="IPR016161">
    <property type="entry name" value="Ald_DH/histidinol_DH"/>
</dbReference>
<dbReference type="InterPro" id="IPR016163">
    <property type="entry name" value="Ald_DH_C"/>
</dbReference>
<dbReference type="InterPro" id="IPR016162">
    <property type="entry name" value="Ald_DH_N"/>
</dbReference>
<dbReference type="InterPro" id="IPR015590">
    <property type="entry name" value="Aldehyde_DH_dom"/>
</dbReference>
<dbReference type="InterPro" id="IPR020593">
    <property type="entry name" value="G-glutamylP_reductase_CS"/>
</dbReference>
<dbReference type="InterPro" id="IPR012134">
    <property type="entry name" value="Glu-5-SA_DH"/>
</dbReference>
<dbReference type="InterPro" id="IPR000965">
    <property type="entry name" value="GPR_dom"/>
</dbReference>
<dbReference type="NCBIfam" id="NF001221">
    <property type="entry name" value="PRK00197.1"/>
    <property type="match status" value="1"/>
</dbReference>
<dbReference type="NCBIfam" id="TIGR00407">
    <property type="entry name" value="proA"/>
    <property type="match status" value="1"/>
</dbReference>
<dbReference type="PANTHER" id="PTHR11063:SF8">
    <property type="entry name" value="DELTA-1-PYRROLINE-5-CARBOXYLATE SYNTHASE"/>
    <property type="match status" value="1"/>
</dbReference>
<dbReference type="PANTHER" id="PTHR11063">
    <property type="entry name" value="GLUTAMATE SEMIALDEHYDE DEHYDROGENASE"/>
    <property type="match status" value="1"/>
</dbReference>
<dbReference type="Pfam" id="PF00171">
    <property type="entry name" value="Aldedh"/>
    <property type="match status" value="2"/>
</dbReference>
<dbReference type="PIRSF" id="PIRSF000151">
    <property type="entry name" value="GPR"/>
    <property type="match status" value="1"/>
</dbReference>
<dbReference type="SUPFAM" id="SSF53720">
    <property type="entry name" value="ALDH-like"/>
    <property type="match status" value="1"/>
</dbReference>
<dbReference type="PROSITE" id="PS01223">
    <property type="entry name" value="PROA"/>
    <property type="match status" value="1"/>
</dbReference>